<comment type="catalytic activity">
    <reaction evidence="1">
        <text>D-glyceraldehyde 3-phosphate + phosphate + NADP(+) = (2R)-3-phospho-glyceroyl phosphate + NADPH + H(+)</text>
        <dbReference type="Rhea" id="RHEA:10296"/>
        <dbReference type="ChEBI" id="CHEBI:15378"/>
        <dbReference type="ChEBI" id="CHEBI:43474"/>
        <dbReference type="ChEBI" id="CHEBI:57604"/>
        <dbReference type="ChEBI" id="CHEBI:57783"/>
        <dbReference type="ChEBI" id="CHEBI:58349"/>
        <dbReference type="ChEBI" id="CHEBI:59776"/>
        <dbReference type="EC" id="1.2.1.59"/>
    </reaction>
</comment>
<comment type="catalytic activity">
    <reaction evidence="1">
        <text>D-glyceraldehyde 3-phosphate + phosphate + NAD(+) = (2R)-3-phospho-glyceroyl phosphate + NADH + H(+)</text>
        <dbReference type="Rhea" id="RHEA:10300"/>
        <dbReference type="ChEBI" id="CHEBI:15378"/>
        <dbReference type="ChEBI" id="CHEBI:43474"/>
        <dbReference type="ChEBI" id="CHEBI:57540"/>
        <dbReference type="ChEBI" id="CHEBI:57604"/>
        <dbReference type="ChEBI" id="CHEBI:57945"/>
        <dbReference type="ChEBI" id="CHEBI:59776"/>
        <dbReference type="EC" id="1.2.1.59"/>
    </reaction>
</comment>
<comment type="pathway">
    <text evidence="1">Carbohydrate degradation; glycolysis; pyruvate from D-glyceraldehyde 3-phosphate: step 1/5.</text>
</comment>
<comment type="subunit">
    <text evidence="1">Homotetramer.</text>
</comment>
<comment type="subcellular location">
    <subcellularLocation>
        <location evidence="1">Cytoplasm</location>
    </subcellularLocation>
</comment>
<comment type="similarity">
    <text evidence="1">Belongs to the glyceraldehyde-3-phosphate dehydrogenase family.</text>
</comment>
<name>G3P_SACI2</name>
<proteinExistence type="inferred from homology"/>
<sequence length="340" mass="37538">MISVAVNGYGTIGKRVADAILKQPDMRLVGVAKTSPNYEAFIAHRKGIKIYVPQQSIKKFEEAGIPVAGTIEDLVKASDIVVDTTPNGVGAQYKPIYQQFQRNAIFQGGEKAEVADISFSALCNYDEALGKKYIRVVSCNTTALLRTICTINKVTKVEKVRATIVRRAADQKEVKKGPINSLVPDPATVPSHHAKDVNSVIKNLDIVTMAVIAPTTLMHMHFINITLKDKVEKKDVLSVLENTPRIVLISSKYDAEATAELVEVARDLKRERNDIPEVMVFDDSVYVKDNEVMLMYAVHQESIVVPENVDAIRASTRLMSAEDSIRITNESLGILKGYLI</sequence>
<keyword id="KW-0963">Cytoplasm</keyword>
<keyword id="KW-0324">Glycolysis</keyword>
<keyword id="KW-0520">NAD</keyword>
<keyword id="KW-0521">NADP</keyword>
<keyword id="KW-0560">Oxidoreductase</keyword>
<gene>
    <name evidence="1" type="primary">gap</name>
    <name type="ordered locus">LS215_1689</name>
</gene>
<evidence type="ECO:0000255" key="1">
    <source>
        <dbReference type="HAMAP-Rule" id="MF_00559"/>
    </source>
</evidence>
<organism>
    <name type="scientific">Saccharolobus islandicus (strain L.S.2.15 / Lassen #1)</name>
    <name type="common">Sulfolobus islandicus</name>
    <dbReference type="NCBI Taxonomy" id="429572"/>
    <lineage>
        <taxon>Archaea</taxon>
        <taxon>Thermoproteota</taxon>
        <taxon>Thermoprotei</taxon>
        <taxon>Sulfolobales</taxon>
        <taxon>Sulfolobaceae</taxon>
        <taxon>Saccharolobus</taxon>
    </lineage>
</organism>
<reference key="1">
    <citation type="journal article" date="2009" name="Proc. Natl. Acad. Sci. U.S.A.">
        <title>Biogeography of the Sulfolobus islandicus pan-genome.</title>
        <authorList>
            <person name="Reno M.L."/>
            <person name="Held N.L."/>
            <person name="Fields C.J."/>
            <person name="Burke P.V."/>
            <person name="Whitaker R.J."/>
        </authorList>
    </citation>
    <scope>NUCLEOTIDE SEQUENCE [LARGE SCALE GENOMIC DNA]</scope>
    <source>
        <strain>L.S.2.15 / Lassen #1</strain>
    </source>
</reference>
<accession>C3MQN0</accession>
<feature type="chain" id="PRO_1000212037" description="Glyceraldehyde-3-phosphate dehydrogenase">
    <location>
        <begin position="1"/>
        <end position="340"/>
    </location>
</feature>
<feature type="active site" description="Nucleophile" evidence="1">
    <location>
        <position position="139"/>
    </location>
</feature>
<feature type="binding site" evidence="1">
    <location>
        <begin position="11"/>
        <end position="12"/>
    </location>
    <ligand>
        <name>NAD(+)</name>
        <dbReference type="ChEBI" id="CHEBI:57540"/>
    </ligand>
</feature>
<feature type="binding site" evidence="1">
    <location>
        <position position="109"/>
    </location>
    <ligand>
        <name>NAD(+)</name>
        <dbReference type="ChEBI" id="CHEBI:57540"/>
    </ligand>
</feature>
<feature type="binding site" evidence="1">
    <location>
        <begin position="138"/>
        <end position="140"/>
    </location>
    <ligand>
        <name>D-glyceraldehyde 3-phosphate</name>
        <dbReference type="ChEBI" id="CHEBI:59776"/>
    </ligand>
</feature>
<feature type="binding site" evidence="1">
    <location>
        <position position="167"/>
    </location>
    <ligand>
        <name>NAD(+)</name>
        <dbReference type="ChEBI" id="CHEBI:57540"/>
    </ligand>
</feature>
<feature type="binding site" evidence="1">
    <location>
        <begin position="193"/>
        <end position="194"/>
    </location>
    <ligand>
        <name>D-glyceraldehyde 3-phosphate</name>
        <dbReference type="ChEBI" id="CHEBI:59776"/>
    </ligand>
</feature>
<feature type="binding site" evidence="1">
    <location>
        <position position="300"/>
    </location>
    <ligand>
        <name>NAD(+)</name>
        <dbReference type="ChEBI" id="CHEBI:57540"/>
    </ligand>
</feature>
<protein>
    <recommendedName>
        <fullName evidence="1">Glyceraldehyde-3-phosphate dehydrogenase</fullName>
        <shortName evidence="1">GAPDH</shortName>
        <ecNumber evidence="1">1.2.1.59</ecNumber>
    </recommendedName>
    <alternativeName>
        <fullName evidence="1">NAD(P)-dependent glyceraldehyde-3-phosphate dehydrogenase</fullName>
    </alternativeName>
</protein>
<dbReference type="EC" id="1.2.1.59" evidence="1"/>
<dbReference type="EMBL" id="CP001399">
    <property type="protein sequence ID" value="ACP35693.1"/>
    <property type="molecule type" value="Genomic_DNA"/>
</dbReference>
<dbReference type="RefSeq" id="WP_012713829.1">
    <property type="nucleotide sequence ID" value="NC_012589.1"/>
</dbReference>
<dbReference type="SMR" id="C3MQN0"/>
<dbReference type="GeneID" id="7799324"/>
<dbReference type="KEGG" id="sis:LS215_1689"/>
<dbReference type="HOGENOM" id="CLU_069533_0_0_2"/>
<dbReference type="OrthoDB" id="295712at2157"/>
<dbReference type="UniPathway" id="UPA00109">
    <property type="reaction ID" value="UER00184"/>
</dbReference>
<dbReference type="Proteomes" id="UP000001747">
    <property type="component" value="Chromosome"/>
</dbReference>
<dbReference type="GO" id="GO:0005737">
    <property type="term" value="C:cytoplasm"/>
    <property type="evidence" value="ECO:0007669"/>
    <property type="project" value="UniProtKB-SubCell"/>
</dbReference>
<dbReference type="GO" id="GO:0008839">
    <property type="term" value="F:4-hydroxy-tetrahydrodipicolinate reductase"/>
    <property type="evidence" value="ECO:0007669"/>
    <property type="project" value="InterPro"/>
</dbReference>
<dbReference type="GO" id="GO:0004365">
    <property type="term" value="F:glyceraldehyde-3-phosphate dehydrogenase (NAD+) (phosphorylating) activity"/>
    <property type="evidence" value="ECO:0007669"/>
    <property type="project" value="UniProtKB-UniRule"/>
</dbReference>
<dbReference type="GO" id="GO:0047100">
    <property type="term" value="F:glyceraldehyde-3-phosphate dehydrogenase (NADP+) (phosphorylating) activity"/>
    <property type="evidence" value="ECO:0007669"/>
    <property type="project" value="RHEA"/>
</dbReference>
<dbReference type="GO" id="GO:0051287">
    <property type="term" value="F:NAD binding"/>
    <property type="evidence" value="ECO:0007669"/>
    <property type="project" value="InterPro"/>
</dbReference>
<dbReference type="GO" id="GO:0050661">
    <property type="term" value="F:NADP binding"/>
    <property type="evidence" value="ECO:0007669"/>
    <property type="project" value="InterPro"/>
</dbReference>
<dbReference type="GO" id="GO:0006096">
    <property type="term" value="P:glycolytic process"/>
    <property type="evidence" value="ECO:0007669"/>
    <property type="project" value="UniProtKB-UniRule"/>
</dbReference>
<dbReference type="GO" id="GO:0009089">
    <property type="term" value="P:lysine biosynthetic process via diaminopimelate"/>
    <property type="evidence" value="ECO:0007669"/>
    <property type="project" value="InterPro"/>
</dbReference>
<dbReference type="CDD" id="cd18127">
    <property type="entry name" value="GAPDH_II_C"/>
    <property type="match status" value="1"/>
</dbReference>
<dbReference type="CDD" id="cd02278">
    <property type="entry name" value="GAPDH_II_N"/>
    <property type="match status" value="1"/>
</dbReference>
<dbReference type="Gene3D" id="3.30.360.10">
    <property type="entry name" value="Dihydrodipicolinate Reductase, domain 2"/>
    <property type="match status" value="1"/>
</dbReference>
<dbReference type="Gene3D" id="3.40.50.720">
    <property type="entry name" value="NAD(P)-binding Rossmann-like Domain"/>
    <property type="match status" value="1"/>
</dbReference>
<dbReference type="HAMAP" id="MF_00559">
    <property type="entry name" value="G3P_dehdrog_arch"/>
    <property type="match status" value="1"/>
</dbReference>
<dbReference type="InterPro" id="IPR000846">
    <property type="entry name" value="DapB_N"/>
</dbReference>
<dbReference type="InterPro" id="IPR020831">
    <property type="entry name" value="GlycerAld/Erythrose_P_DH"/>
</dbReference>
<dbReference type="InterPro" id="IPR020830">
    <property type="entry name" value="GlycerAld_3-P_DH_AS"/>
</dbReference>
<dbReference type="InterPro" id="IPR020829">
    <property type="entry name" value="GlycerAld_3-P_DH_cat"/>
</dbReference>
<dbReference type="InterPro" id="IPR020828">
    <property type="entry name" value="GlycerAld_3-P_DH_NAD(P)-bd"/>
</dbReference>
<dbReference type="InterPro" id="IPR006436">
    <property type="entry name" value="Glyceraldehyde-3-P_DH_2_arc"/>
</dbReference>
<dbReference type="InterPro" id="IPR036291">
    <property type="entry name" value="NAD(P)-bd_dom_sf"/>
</dbReference>
<dbReference type="NCBIfam" id="TIGR01546">
    <property type="entry name" value="GAPDH-II_archae"/>
    <property type="match status" value="1"/>
</dbReference>
<dbReference type="NCBIfam" id="NF003251">
    <property type="entry name" value="PRK04207.1"/>
    <property type="match status" value="1"/>
</dbReference>
<dbReference type="Pfam" id="PF01113">
    <property type="entry name" value="DapB_N"/>
    <property type="match status" value="1"/>
</dbReference>
<dbReference type="Pfam" id="PF02800">
    <property type="entry name" value="Gp_dh_C"/>
    <property type="match status" value="1"/>
</dbReference>
<dbReference type="PIRSF" id="PIRSF000149">
    <property type="entry name" value="GAP_DH"/>
    <property type="match status" value="1"/>
</dbReference>
<dbReference type="SMART" id="SM00846">
    <property type="entry name" value="Gp_dh_N"/>
    <property type="match status" value="1"/>
</dbReference>
<dbReference type="SUPFAM" id="SSF55347">
    <property type="entry name" value="Glyceraldehyde-3-phosphate dehydrogenase-like, C-terminal domain"/>
    <property type="match status" value="1"/>
</dbReference>
<dbReference type="SUPFAM" id="SSF51735">
    <property type="entry name" value="NAD(P)-binding Rossmann-fold domains"/>
    <property type="match status" value="1"/>
</dbReference>
<dbReference type="PROSITE" id="PS00071">
    <property type="entry name" value="GAPDH"/>
    <property type="match status" value="1"/>
</dbReference>